<gene>
    <name evidence="3" type="primary">RA3</name>
    <name evidence="5" type="ORF">ZEAMMB73_Zm00001d022193</name>
</gene>
<accession>Q1W5S8</accession>
<proteinExistence type="evidence at protein level"/>
<comment type="function">
    <text evidence="2">Removes the phosphate from trehalose 6-phosphate to produce free trehalose. Is specific for trehalose 6-phosphate. Does not possess activity toward glucose, sucrose or fructose 6-phosphates. Regulates inflorescence branching. Required to establish the correct identity and determinacy of axillary meristems in both male and female inflorescences. May act through a sugar signal that moves into axillary meristems. Acts upstream of RA1. May have a transcriptional regulatory function.</text>
</comment>
<comment type="catalytic activity">
    <reaction evidence="2">
        <text>alpha,alpha-trehalose 6-phosphate + H2O = alpha,alpha-trehalose + phosphate</text>
        <dbReference type="Rhea" id="RHEA:23420"/>
        <dbReference type="ChEBI" id="CHEBI:15377"/>
        <dbReference type="ChEBI" id="CHEBI:16551"/>
        <dbReference type="ChEBI" id="CHEBI:43474"/>
        <dbReference type="ChEBI" id="CHEBI:58429"/>
        <dbReference type="EC" id="3.1.3.12"/>
    </reaction>
</comment>
<comment type="cofactor">
    <cofactor evidence="1">
        <name>a divalent metal cation</name>
        <dbReference type="ChEBI" id="CHEBI:60240"/>
    </cofactor>
</comment>
<comment type="pathway">
    <text evidence="4">Glycan biosynthesis; trehalose biosynthesis.</text>
</comment>
<comment type="tissue specificity">
    <text evidence="2">Expressed in axillary inflorescence meristems.</text>
</comment>
<comment type="disruption phenotype">
    <text evidence="2">Additional long branches in tassels and abnormal long branches at their bases in ears. Abnormal identity of axillary meristems.</text>
</comment>
<comment type="similarity">
    <text evidence="4">Belongs to the trehalose phosphatase family.</text>
</comment>
<sequence length="361" mass="39773">MTKHAAYSSEDVVAAVAAPAPAGRHFTSFQALKGAPLDCKKHAAVDLSASGAAVVGGGPWFESMKASSPRRAADAEHGDWMEKHPSALAQFEPLLAAAKGKQIVMFLDYDGTLSPIVEDPDRAVMSEEMREAVRRVAEHFPTAIVSGRCRDKVLNFVKLTELYYAGSHGMDIQGPAACRQPNHVQQAEAAAVHYQAASEFLPVIEEVFRTLTAKMESIAGARVEHNKYCLSVHFRCVREEEWNAVNEEVRSVLREYPNLKLTHGRKVLEIRPSIKWDKGKALEFLLKSLGYAGRNDVFPIYIGDDRTDEDAFKVLRNMGQGIGILVSKLPKETAASYSLSDPAEVKEFLRKLANKKGARQP</sequence>
<keyword id="KW-0341">Growth regulation</keyword>
<keyword id="KW-0378">Hydrolase</keyword>
<keyword id="KW-1185">Reference proteome</keyword>
<organism>
    <name type="scientific">Zea mays</name>
    <name type="common">Maize</name>
    <dbReference type="NCBI Taxonomy" id="4577"/>
    <lineage>
        <taxon>Eukaryota</taxon>
        <taxon>Viridiplantae</taxon>
        <taxon>Streptophyta</taxon>
        <taxon>Embryophyta</taxon>
        <taxon>Tracheophyta</taxon>
        <taxon>Spermatophyta</taxon>
        <taxon>Magnoliopsida</taxon>
        <taxon>Liliopsida</taxon>
        <taxon>Poales</taxon>
        <taxon>Poaceae</taxon>
        <taxon>PACMAD clade</taxon>
        <taxon>Panicoideae</taxon>
        <taxon>Andropogonodae</taxon>
        <taxon>Andropogoneae</taxon>
        <taxon>Tripsacinae</taxon>
        <taxon>Zea</taxon>
    </lineage>
</organism>
<feature type="chain" id="PRO_0000442047" description="Trehalose 6-phosphate phosphatase RA3">
    <location>
        <begin position="1"/>
        <end position="361"/>
    </location>
</feature>
<name>TPRA3_MAIZE</name>
<evidence type="ECO:0000250" key="1"/>
<evidence type="ECO:0000269" key="2">
    <source>
    </source>
</evidence>
<evidence type="ECO:0000303" key="3">
    <source>
    </source>
</evidence>
<evidence type="ECO:0000305" key="4"/>
<evidence type="ECO:0000312" key="5">
    <source>
        <dbReference type="EMBL" id="ONM59832.1"/>
    </source>
</evidence>
<reference key="1">
    <citation type="journal article" date="2006" name="Nature">
        <title>A trehalose metabolic enzyme controls inflorescence architecture in maize.</title>
        <authorList>
            <person name="Satoh-Nagasawa N."/>
            <person name="Nagasawa N."/>
            <person name="Malcomber S.T."/>
            <person name="Sakai H."/>
            <person name="Jackson D."/>
        </authorList>
    </citation>
    <scope>NUCLEOTIDE SEQUENCE [MRNA]</scope>
    <scope>FUNCTION</scope>
    <scope>CATALYTIC ACTIVITY</scope>
    <scope>TISSUE SPECIFICITY</scope>
    <scope>DISRUPTION PHENOTYPE</scope>
</reference>
<reference key="2">
    <citation type="journal article" date="2009" name="Science">
        <title>The B73 maize genome: complexity, diversity, and dynamics.</title>
        <authorList>
            <person name="Schnable P.S."/>
            <person name="Ware D."/>
            <person name="Fulton R.S."/>
            <person name="Stein J.C."/>
            <person name="Wei F."/>
            <person name="Pasternak S."/>
            <person name="Liang C."/>
            <person name="Zhang J."/>
            <person name="Fulton L."/>
            <person name="Graves T.A."/>
            <person name="Minx P."/>
            <person name="Reily A.D."/>
            <person name="Courtney L."/>
            <person name="Kruchowski S.S."/>
            <person name="Tomlinson C."/>
            <person name="Strong C."/>
            <person name="Delehaunty K."/>
            <person name="Fronick C."/>
            <person name="Courtney B."/>
            <person name="Rock S.M."/>
            <person name="Belter E."/>
            <person name="Du F."/>
            <person name="Kim K."/>
            <person name="Abbott R.M."/>
            <person name="Cotton M."/>
            <person name="Levy A."/>
            <person name="Marchetto P."/>
            <person name="Ochoa K."/>
            <person name="Jackson S.M."/>
            <person name="Gillam B."/>
            <person name="Chen W."/>
            <person name="Yan L."/>
            <person name="Higginbotham J."/>
            <person name="Cardenas M."/>
            <person name="Waligorski J."/>
            <person name="Applebaum E."/>
            <person name="Phelps L."/>
            <person name="Falcone J."/>
            <person name="Kanchi K."/>
            <person name="Thane T."/>
            <person name="Scimone A."/>
            <person name="Thane N."/>
            <person name="Henke J."/>
            <person name="Wang T."/>
            <person name="Ruppert J."/>
            <person name="Shah N."/>
            <person name="Rotter K."/>
            <person name="Hodges J."/>
            <person name="Ingenthron E."/>
            <person name="Cordes M."/>
            <person name="Kohlberg S."/>
            <person name="Sgro J."/>
            <person name="Delgado B."/>
            <person name="Mead K."/>
            <person name="Chinwalla A."/>
            <person name="Leonard S."/>
            <person name="Crouse K."/>
            <person name="Collura K."/>
            <person name="Kudrna D."/>
            <person name="Currie J."/>
            <person name="He R."/>
            <person name="Angelova A."/>
            <person name="Rajasekar S."/>
            <person name="Mueller T."/>
            <person name="Lomeli R."/>
            <person name="Scara G."/>
            <person name="Ko A."/>
            <person name="Delaney K."/>
            <person name="Wissotski M."/>
            <person name="Lopez G."/>
            <person name="Campos D."/>
            <person name="Braidotti M."/>
            <person name="Ashley E."/>
            <person name="Golser W."/>
            <person name="Kim H."/>
            <person name="Lee S."/>
            <person name="Lin J."/>
            <person name="Dujmic Z."/>
            <person name="Kim W."/>
            <person name="Talag J."/>
            <person name="Zuccolo A."/>
            <person name="Fan C."/>
            <person name="Sebastian A."/>
            <person name="Kramer M."/>
            <person name="Spiegel L."/>
            <person name="Nascimento L."/>
            <person name="Zutavern T."/>
            <person name="Miller B."/>
            <person name="Ambroise C."/>
            <person name="Muller S."/>
            <person name="Spooner W."/>
            <person name="Narechania A."/>
            <person name="Ren L."/>
            <person name="Wei S."/>
            <person name="Kumari S."/>
            <person name="Faga B."/>
            <person name="Levy M.J."/>
            <person name="McMahan L."/>
            <person name="Van Buren P."/>
            <person name="Vaughn M.W."/>
            <person name="Ying K."/>
            <person name="Yeh C.-T."/>
            <person name="Emrich S.J."/>
            <person name="Jia Y."/>
            <person name="Kalyanaraman A."/>
            <person name="Hsia A.-P."/>
            <person name="Barbazuk W.B."/>
            <person name="Baucom R.S."/>
            <person name="Brutnell T.P."/>
            <person name="Carpita N.C."/>
            <person name="Chaparro C."/>
            <person name="Chia J.-M."/>
            <person name="Deragon J.-M."/>
            <person name="Estill J.C."/>
            <person name="Fu Y."/>
            <person name="Jeddeloh J.A."/>
            <person name="Han Y."/>
            <person name="Lee H."/>
            <person name="Li P."/>
            <person name="Lisch D.R."/>
            <person name="Liu S."/>
            <person name="Liu Z."/>
            <person name="Nagel D.H."/>
            <person name="McCann M.C."/>
            <person name="SanMiguel P."/>
            <person name="Myers A.M."/>
            <person name="Nettleton D."/>
            <person name="Nguyen J."/>
            <person name="Penning B.W."/>
            <person name="Ponnala L."/>
            <person name="Schneider K.L."/>
            <person name="Schwartz D.C."/>
            <person name="Sharma A."/>
            <person name="Soderlund C."/>
            <person name="Springer N.M."/>
            <person name="Sun Q."/>
            <person name="Wang H."/>
            <person name="Waterman M."/>
            <person name="Westerman R."/>
            <person name="Wolfgruber T.K."/>
            <person name="Yang L."/>
            <person name="Yu Y."/>
            <person name="Zhang L."/>
            <person name="Zhou S."/>
            <person name="Zhu Q."/>
            <person name="Bennetzen J.L."/>
            <person name="Dawe R.K."/>
            <person name="Jiang J."/>
            <person name="Jiang N."/>
            <person name="Presting G.G."/>
            <person name="Wessler S.R."/>
            <person name="Aluru S."/>
            <person name="Martienssen R.A."/>
            <person name="Clifton S.W."/>
            <person name="McCombie W.R."/>
            <person name="Wing R.A."/>
            <person name="Wilson R.K."/>
        </authorList>
    </citation>
    <scope>NUCLEOTIDE SEQUENCE [LARGE SCALE GENOMIC DNA]</scope>
    <source>
        <strain>cv. B73</strain>
    </source>
</reference>
<reference key="3">
    <citation type="journal article" date="2009" name="PLoS Genet.">
        <title>Sequencing, mapping, and analysis of 27,455 maize full-length cDNAs.</title>
        <authorList>
            <person name="Soderlund C."/>
            <person name="Descour A."/>
            <person name="Kudrna D."/>
            <person name="Bomhoff M."/>
            <person name="Boyd L."/>
            <person name="Currie J."/>
            <person name="Angelova A."/>
            <person name="Collura K."/>
            <person name="Wissotski M."/>
            <person name="Ashley E."/>
            <person name="Morrow D."/>
            <person name="Fernandes J."/>
            <person name="Walbot V."/>
            <person name="Yu Y."/>
        </authorList>
    </citation>
    <scope>NUCLEOTIDE SEQUENCE [LARGE SCALE MRNA]</scope>
    <source>
        <strain>cv. B73</strain>
    </source>
</reference>
<protein>
    <recommendedName>
        <fullName evidence="4">Trehalose 6-phosphate phosphatase RA3</fullName>
        <ecNumber evidence="2">3.1.3.12</ecNumber>
    </recommendedName>
    <alternativeName>
        <fullName evidence="3">Protein RAMOSA 3</fullName>
    </alternativeName>
</protein>
<dbReference type="EC" id="3.1.3.12" evidence="2"/>
<dbReference type="EMBL" id="DQ436920">
    <property type="protein sequence ID" value="ABD92779.1"/>
    <property type="molecule type" value="mRNA"/>
</dbReference>
<dbReference type="EMBL" id="BT036738">
    <property type="protein sequence ID" value="ACF81743.1"/>
    <property type="molecule type" value="mRNA"/>
</dbReference>
<dbReference type="EMBL" id="CM007650">
    <property type="protein sequence ID" value="ONM59832.1"/>
    <property type="molecule type" value="Genomic_DNA"/>
</dbReference>
<dbReference type="RefSeq" id="NP_001105864.1">
    <property type="nucleotide sequence ID" value="NM_001112394.2"/>
</dbReference>
<dbReference type="SMR" id="Q1W5S8"/>
<dbReference type="STRING" id="4577.Q1W5S8"/>
<dbReference type="PaxDb" id="4577-GRMZM2G014729_P01"/>
<dbReference type="EnsemblPlants" id="Zm00001eb327910_T002">
    <property type="protein sequence ID" value="Zm00001eb327910_P002"/>
    <property type="gene ID" value="Zm00001eb327910"/>
</dbReference>
<dbReference type="GeneID" id="732774"/>
<dbReference type="Gramene" id="Zm00001eb327910_T002">
    <property type="protein sequence ID" value="Zm00001eb327910_P002"/>
    <property type="gene ID" value="Zm00001eb327910"/>
</dbReference>
<dbReference type="KEGG" id="zma:732774"/>
<dbReference type="eggNOG" id="KOG1050">
    <property type="taxonomic scope" value="Eukaryota"/>
</dbReference>
<dbReference type="HOGENOM" id="CLU_037265_1_1_1"/>
<dbReference type="InParanoid" id="Q1W5S8"/>
<dbReference type="OrthoDB" id="411251at2759"/>
<dbReference type="UniPathway" id="UPA00299"/>
<dbReference type="Proteomes" id="UP000007305">
    <property type="component" value="Chromosome 7"/>
</dbReference>
<dbReference type="ExpressionAtlas" id="Q1W5S8">
    <property type="expression patterns" value="baseline and differential"/>
</dbReference>
<dbReference type="GO" id="GO:0004805">
    <property type="term" value="F:trehalose-phosphatase activity"/>
    <property type="evidence" value="ECO:0000314"/>
    <property type="project" value="UniProtKB"/>
</dbReference>
<dbReference type="GO" id="GO:2000032">
    <property type="term" value="P:regulation of secondary shoot formation"/>
    <property type="evidence" value="ECO:0000315"/>
    <property type="project" value="UniProtKB"/>
</dbReference>
<dbReference type="GO" id="GO:0005992">
    <property type="term" value="P:trehalose biosynthetic process"/>
    <property type="evidence" value="ECO:0000314"/>
    <property type="project" value="UniProtKB"/>
</dbReference>
<dbReference type="CDD" id="cd01627">
    <property type="entry name" value="HAD_TPP"/>
    <property type="match status" value="1"/>
</dbReference>
<dbReference type="FunFam" id="3.30.70.1020:FF:000004">
    <property type="entry name" value="Trehalose 6-phosphate phosphatase"/>
    <property type="match status" value="1"/>
</dbReference>
<dbReference type="FunFam" id="3.40.50.1000:FF:000073">
    <property type="entry name" value="Trehalose 6-phosphate phosphatase"/>
    <property type="match status" value="1"/>
</dbReference>
<dbReference type="FunFam" id="3.40.50.1000:FF:000099">
    <property type="entry name" value="Trehalose 6-phosphate phosphatase"/>
    <property type="match status" value="1"/>
</dbReference>
<dbReference type="Gene3D" id="3.40.50.1000">
    <property type="entry name" value="HAD superfamily/HAD-like"/>
    <property type="match status" value="2"/>
</dbReference>
<dbReference type="InterPro" id="IPR036412">
    <property type="entry name" value="HAD-like_sf"/>
</dbReference>
<dbReference type="InterPro" id="IPR006379">
    <property type="entry name" value="HAD-SF_hydro_IIB"/>
</dbReference>
<dbReference type="InterPro" id="IPR023214">
    <property type="entry name" value="HAD_sf"/>
</dbReference>
<dbReference type="InterPro" id="IPR044651">
    <property type="entry name" value="OTSB-like"/>
</dbReference>
<dbReference type="InterPro" id="IPR003337">
    <property type="entry name" value="Trehalose_PPase"/>
</dbReference>
<dbReference type="NCBIfam" id="TIGR01484">
    <property type="entry name" value="HAD-SF-IIB"/>
    <property type="match status" value="1"/>
</dbReference>
<dbReference type="NCBIfam" id="TIGR00685">
    <property type="entry name" value="T6PP"/>
    <property type="match status" value="1"/>
</dbReference>
<dbReference type="PANTHER" id="PTHR43768">
    <property type="entry name" value="TREHALOSE 6-PHOSPHATE PHOSPHATASE"/>
    <property type="match status" value="1"/>
</dbReference>
<dbReference type="PANTHER" id="PTHR43768:SF34">
    <property type="entry name" value="TREHALOSE 6-PHOSPHATE PHOSPHATASE RA3"/>
    <property type="match status" value="1"/>
</dbReference>
<dbReference type="Pfam" id="PF02358">
    <property type="entry name" value="Trehalose_PPase"/>
    <property type="match status" value="1"/>
</dbReference>
<dbReference type="SUPFAM" id="SSF56784">
    <property type="entry name" value="HAD-like"/>
    <property type="match status" value="1"/>
</dbReference>